<evidence type="ECO:0000255" key="1">
    <source>
        <dbReference type="HAMAP-Rule" id="MF_01494"/>
    </source>
</evidence>
<evidence type="ECO:0000256" key="2">
    <source>
        <dbReference type="SAM" id="MobiDB-lite"/>
    </source>
</evidence>
<evidence type="ECO:0000269" key="3">
    <source>
    </source>
</evidence>
<evidence type="ECO:0000269" key="4">
    <source>
    </source>
</evidence>
<proteinExistence type="evidence at transcript level"/>
<gene>
    <name evidence="1" type="primary">cshB</name>
    <name type="ordered locus">BC_4283</name>
</gene>
<keyword id="KW-0067">ATP-binding</keyword>
<keyword id="KW-0963">Cytoplasm</keyword>
<keyword id="KW-0347">Helicase</keyword>
<keyword id="KW-0378">Hydrolase</keyword>
<keyword id="KW-0547">Nucleotide-binding</keyword>
<keyword id="KW-1185">Reference proteome</keyword>
<keyword id="KW-0694">RNA-binding</keyword>
<keyword id="KW-0346">Stress response</keyword>
<reference key="1">
    <citation type="journal article" date="2003" name="Nature">
        <title>Genome sequence of Bacillus cereus and comparative analysis with Bacillus anthracis.</title>
        <authorList>
            <person name="Ivanova N."/>
            <person name="Sorokin A."/>
            <person name="Anderson I."/>
            <person name="Galleron N."/>
            <person name="Candelon B."/>
            <person name="Kapatral V."/>
            <person name="Bhattacharyya A."/>
            <person name="Reznik G."/>
            <person name="Mikhailova N."/>
            <person name="Lapidus A."/>
            <person name="Chu L."/>
            <person name="Mazur M."/>
            <person name="Goltsman E."/>
            <person name="Larsen N."/>
            <person name="D'Souza M."/>
            <person name="Walunas T."/>
            <person name="Grechkin Y."/>
            <person name="Pusch G."/>
            <person name="Haselkorn R."/>
            <person name="Fonstein M."/>
            <person name="Ehrlich S.D."/>
            <person name="Overbeek R."/>
            <person name="Kyrpides N.C."/>
        </authorList>
    </citation>
    <scope>NUCLEOTIDE SEQUENCE [LARGE SCALE GENOMIC DNA]</scope>
    <source>
        <strain>ATCC 14579 / DSM 31 / CCUG 7414 / JCM 2152 / NBRC 15305 / NCIMB 9373 / NCTC 2599 / NRRL B-3711</strain>
    </source>
</reference>
<reference key="2">
    <citation type="journal article" date="2010" name="Appl. Environ. Microbiol.">
        <title>Differential involvement of the five RNA helicases in adaptation of Bacillus cereus ATCC 14579 to low growth temperatures.</title>
        <authorList>
            <person name="Pandiani F."/>
            <person name="Brillard J."/>
            <person name="Bornard I."/>
            <person name="Michaud C."/>
            <person name="Chamot S."/>
            <person name="Nguyen-the C."/>
            <person name="Broussolle V."/>
        </authorList>
    </citation>
    <scope>INDUCTION</scope>
    <scope>DISRUPTION PHENOTYPE</scope>
    <source>
        <strain>ATCC 14579 / DSM 31 / CCUG 7414 / JCM 2152 / NBRC 15305 / NCIMB 9373 / NCTC 2599 / NRRL B-3711</strain>
    </source>
</reference>
<reference key="3">
    <citation type="journal article" date="2011" name="Appl. Environ. Microbiol.">
        <title>Role of the five RNA helicases in the adaptive response of Bacillus cereus ATCC 14579 cells to temperature, pH, and oxidative stresses.</title>
        <authorList>
            <person name="Pandiani F."/>
            <person name="Chamot S."/>
            <person name="Brillard J."/>
            <person name="Carlin F."/>
            <person name="Nguyen-the C."/>
            <person name="Broussolle V."/>
        </authorList>
    </citation>
    <scope>FUNCTION</scope>
    <scope>INDUCTION</scope>
    <scope>DISRUPTION PHENOTYPE</scope>
    <source>
        <strain>ATCC 14579 / DSM 31 / CCUG 7414 / JCM 2152 / NBRC 15305 / NCIMB 9373 / NCTC 2599 / NRRL B-3711</strain>
    </source>
</reference>
<name>CSHB_BACCR</name>
<sequence>MTQQTFTQYDFKPFLIDAVRELRFTEPTGIQQKIFPVVKKGVSVIGQSQTGSGKTHAYLLPTLNRINASREEVQLVITAPTRELAQQIYEEIVKLTKFCAEDQMITARCLIGGTDKQRSIEKLKKQPHIVVGTPGRIKDLVEEQALFVHKANTIIVDEADLMLDMGFIHDVDKIAARMPKNLQMLVFSATIPQKLKPFLKKYMENPEHIHINPKQVAAGNIEHYLVPSKHRNKIDLVHKMLLQFKPYLAVVFTNTKKMADQVADGLMERGLKVGRIHGDLSPRDRKKMMKQIRDLEFQYIVATDLAARGIDIQGISHVINYQPPSDLDFFVHRVARTARAGHSGIAVTIYDPANEEALDSLEKQRHIEFKHVDLRGDEWADLGERRRRKSRKKPNDELDVMATKVIKKPKKVKPNYKRKLATERDKVKRKYSNKKR</sequence>
<protein>
    <recommendedName>
        <fullName evidence="1">DEAD-box ATP-dependent RNA helicase CshB</fullName>
        <ecNumber evidence="1">3.6.4.13</ecNumber>
    </recommendedName>
</protein>
<feature type="chain" id="PRO_0000430109" description="DEAD-box ATP-dependent RNA helicase CshB">
    <location>
        <begin position="1"/>
        <end position="436"/>
    </location>
</feature>
<feature type="domain" description="Helicase ATP-binding" evidence="1">
    <location>
        <begin position="35"/>
        <end position="209"/>
    </location>
</feature>
<feature type="domain" description="Helicase C-terminal" evidence="1">
    <location>
        <begin position="240"/>
        <end position="388"/>
    </location>
</feature>
<feature type="region of interest" description="Disordered" evidence="2">
    <location>
        <begin position="385"/>
        <end position="436"/>
    </location>
</feature>
<feature type="short sequence motif" description="Q motif">
    <location>
        <begin position="4"/>
        <end position="32"/>
    </location>
</feature>
<feature type="short sequence motif" description="DEAD box">
    <location>
        <begin position="157"/>
        <end position="160"/>
    </location>
</feature>
<feature type="compositionally biased region" description="Basic residues" evidence="2">
    <location>
        <begin position="405"/>
        <end position="419"/>
    </location>
</feature>
<feature type="compositionally biased region" description="Basic residues" evidence="2">
    <location>
        <begin position="427"/>
        <end position="436"/>
    </location>
</feature>
<feature type="binding site" evidence="1">
    <location>
        <begin position="48"/>
        <end position="55"/>
    </location>
    <ligand>
        <name>ATP</name>
        <dbReference type="ChEBI" id="CHEBI:30616"/>
    </ligand>
</feature>
<accession>Q818H2</accession>
<dbReference type="EC" id="3.6.4.13" evidence="1"/>
<dbReference type="EMBL" id="AE016877">
    <property type="protein sequence ID" value="AAP11197.1"/>
    <property type="molecule type" value="Genomic_DNA"/>
</dbReference>
<dbReference type="RefSeq" id="NP_833996.1">
    <property type="nucleotide sequence ID" value="NC_004722.1"/>
</dbReference>
<dbReference type="RefSeq" id="WP_000194021.1">
    <property type="nucleotide sequence ID" value="NC_004722.1"/>
</dbReference>
<dbReference type="SMR" id="Q818H2"/>
<dbReference type="STRING" id="226900.BC_4283"/>
<dbReference type="KEGG" id="bce:BC4283"/>
<dbReference type="PATRIC" id="fig|226900.8.peg.4427"/>
<dbReference type="HOGENOM" id="CLU_003041_1_3_9"/>
<dbReference type="Proteomes" id="UP000001417">
    <property type="component" value="Chromosome"/>
</dbReference>
<dbReference type="GO" id="GO:0005829">
    <property type="term" value="C:cytosol"/>
    <property type="evidence" value="ECO:0000318"/>
    <property type="project" value="GO_Central"/>
</dbReference>
<dbReference type="GO" id="GO:0005524">
    <property type="term" value="F:ATP binding"/>
    <property type="evidence" value="ECO:0007669"/>
    <property type="project" value="UniProtKB-UniRule"/>
</dbReference>
<dbReference type="GO" id="GO:0016887">
    <property type="term" value="F:ATP hydrolysis activity"/>
    <property type="evidence" value="ECO:0007669"/>
    <property type="project" value="RHEA"/>
</dbReference>
<dbReference type="GO" id="GO:0003724">
    <property type="term" value="F:RNA helicase activity"/>
    <property type="evidence" value="ECO:0000318"/>
    <property type="project" value="GO_Central"/>
</dbReference>
<dbReference type="GO" id="GO:0033592">
    <property type="term" value="F:RNA strand annealing activity"/>
    <property type="evidence" value="ECO:0000318"/>
    <property type="project" value="GO_Central"/>
</dbReference>
<dbReference type="GO" id="GO:0009409">
    <property type="term" value="P:response to cold"/>
    <property type="evidence" value="ECO:0000318"/>
    <property type="project" value="GO_Central"/>
</dbReference>
<dbReference type="GO" id="GO:0006401">
    <property type="term" value="P:RNA catabolic process"/>
    <property type="evidence" value="ECO:0007669"/>
    <property type="project" value="UniProtKB-UniRule"/>
</dbReference>
<dbReference type="CDD" id="cd00268">
    <property type="entry name" value="DEADc"/>
    <property type="match status" value="1"/>
</dbReference>
<dbReference type="CDD" id="cd18787">
    <property type="entry name" value="SF2_C_DEAD"/>
    <property type="match status" value="1"/>
</dbReference>
<dbReference type="Gene3D" id="3.40.50.300">
    <property type="entry name" value="P-loop containing nucleotide triphosphate hydrolases"/>
    <property type="match status" value="2"/>
</dbReference>
<dbReference type="HAMAP" id="MF_01494">
    <property type="entry name" value="DEAD_helicase_CshB"/>
    <property type="match status" value="1"/>
</dbReference>
<dbReference type="InterPro" id="IPR030881">
    <property type="entry name" value="CshB"/>
</dbReference>
<dbReference type="InterPro" id="IPR011545">
    <property type="entry name" value="DEAD/DEAH_box_helicase_dom"/>
</dbReference>
<dbReference type="InterPro" id="IPR050547">
    <property type="entry name" value="DEAD_box_RNA_helicases"/>
</dbReference>
<dbReference type="InterPro" id="IPR014001">
    <property type="entry name" value="Helicase_ATP-bd"/>
</dbReference>
<dbReference type="InterPro" id="IPR001650">
    <property type="entry name" value="Helicase_C-like"/>
</dbReference>
<dbReference type="InterPro" id="IPR027417">
    <property type="entry name" value="P-loop_NTPase"/>
</dbReference>
<dbReference type="InterPro" id="IPR014014">
    <property type="entry name" value="RNA_helicase_DEAD_Q_motif"/>
</dbReference>
<dbReference type="PANTHER" id="PTHR47963">
    <property type="entry name" value="DEAD-BOX ATP-DEPENDENT RNA HELICASE 47, MITOCHONDRIAL"/>
    <property type="match status" value="1"/>
</dbReference>
<dbReference type="PANTHER" id="PTHR47963:SF1">
    <property type="entry name" value="DEAD-BOX ATP-DEPENDENT RNA HELICASE CSHB"/>
    <property type="match status" value="1"/>
</dbReference>
<dbReference type="Pfam" id="PF00270">
    <property type="entry name" value="DEAD"/>
    <property type="match status" value="1"/>
</dbReference>
<dbReference type="Pfam" id="PF00271">
    <property type="entry name" value="Helicase_C"/>
    <property type="match status" value="1"/>
</dbReference>
<dbReference type="SMART" id="SM00487">
    <property type="entry name" value="DEXDc"/>
    <property type="match status" value="1"/>
</dbReference>
<dbReference type="SMART" id="SM00490">
    <property type="entry name" value="HELICc"/>
    <property type="match status" value="1"/>
</dbReference>
<dbReference type="SUPFAM" id="SSF52540">
    <property type="entry name" value="P-loop containing nucleoside triphosphate hydrolases"/>
    <property type="match status" value="1"/>
</dbReference>
<dbReference type="PROSITE" id="PS51192">
    <property type="entry name" value="HELICASE_ATP_BIND_1"/>
    <property type="match status" value="1"/>
</dbReference>
<dbReference type="PROSITE" id="PS51194">
    <property type="entry name" value="HELICASE_CTER"/>
    <property type="match status" value="1"/>
</dbReference>
<dbReference type="PROSITE" id="PS51195">
    <property type="entry name" value="Q_MOTIF"/>
    <property type="match status" value="1"/>
</dbReference>
<comment type="function">
    <text evidence="1 4">Probable DEAD-box RNA helicase. May work in conjunction with the cold shock proteins to ensure proper initiation of transcription at low and optimal temperatures. Unwinds dsRNA in both 5'- and 3'-directions and shows RNA-dependent ATPase activity (By similarity). Probably has a somewhat redundant function with CshA, as cshA can partially complement the growth effects of a cshB deletion.</text>
</comment>
<comment type="catalytic activity">
    <reaction evidence="1">
        <text>ATP + H2O = ADP + phosphate + H(+)</text>
        <dbReference type="Rhea" id="RHEA:13065"/>
        <dbReference type="ChEBI" id="CHEBI:15377"/>
        <dbReference type="ChEBI" id="CHEBI:15378"/>
        <dbReference type="ChEBI" id="CHEBI:30616"/>
        <dbReference type="ChEBI" id="CHEBI:43474"/>
        <dbReference type="ChEBI" id="CHEBI:456216"/>
        <dbReference type="EC" id="3.6.4.13"/>
    </reaction>
</comment>
<comment type="subcellular location">
    <subcellularLocation>
        <location evidence="1">Cytoplasm</location>
    </subcellularLocation>
</comment>
<comment type="induction">
    <text evidence="3 4">Induced at 10 degrees Celsius.</text>
</comment>
<comment type="disruption phenotype">
    <text evidence="3 4">Longer lag phase at 20 degrees Celsius, wild-type growth rate at 30 degrees Celsius, impaired growth at 10 degrees Celsius. At 12 degrees Celsius cells form very long filaments, with incompletely divided, thickened internal membranes. Effects on growth at reduced temperature are partially complemented by cshA, suggesting the 2 genes have a partially redundant function. Decreased growth in the presence of H(2)O(2) and diamide.</text>
</comment>
<comment type="similarity">
    <text evidence="1">Belongs to the DEAD box helicase family. CshB subfamily.</text>
</comment>
<organism>
    <name type="scientific">Bacillus cereus (strain ATCC 14579 / DSM 31 / CCUG 7414 / JCM 2152 / NBRC 15305 / NCIMB 9373 / NCTC 2599 / NRRL B-3711)</name>
    <dbReference type="NCBI Taxonomy" id="226900"/>
    <lineage>
        <taxon>Bacteria</taxon>
        <taxon>Bacillati</taxon>
        <taxon>Bacillota</taxon>
        <taxon>Bacilli</taxon>
        <taxon>Bacillales</taxon>
        <taxon>Bacillaceae</taxon>
        <taxon>Bacillus</taxon>
        <taxon>Bacillus cereus group</taxon>
    </lineage>
</organism>